<comment type="subunit">
    <text evidence="1">May form a heterooligomeric complex that consists of seven subunits: mnhA2, mnhB2, mnhC2, mnhD2, mnhE2, mnhF2 and mnhG2.</text>
</comment>
<comment type="subcellular location">
    <subcellularLocation>
        <location evidence="3">Cell membrane</location>
        <topology evidence="3">Multi-pass membrane protein</topology>
    </subcellularLocation>
</comment>
<comment type="similarity">
    <text evidence="3">Belongs to the CPA3 antiporters (TC 2.A.63) subunit B family.</text>
</comment>
<organism>
    <name type="scientific">Staphylococcus aureus (strain N315)</name>
    <dbReference type="NCBI Taxonomy" id="158879"/>
    <lineage>
        <taxon>Bacteria</taxon>
        <taxon>Bacillati</taxon>
        <taxon>Bacillota</taxon>
        <taxon>Bacilli</taxon>
        <taxon>Bacillales</taxon>
        <taxon>Staphylococcaceae</taxon>
        <taxon>Staphylococcus</taxon>
    </lineage>
</organism>
<evidence type="ECO:0000250" key="1"/>
<evidence type="ECO:0000255" key="2"/>
<evidence type="ECO:0000305" key="3"/>
<protein>
    <recommendedName>
        <fullName>Putative antiporter subunit mnhB2</fullName>
    </recommendedName>
    <alternativeName>
        <fullName>Mrp complex subunit B2</fullName>
    </alternativeName>
    <alternativeName>
        <fullName>Putative NADH-ubiquinone oxidoreductase subunit mnhB2</fullName>
    </alternativeName>
</protein>
<name>MNHB2_STAAN</name>
<feature type="chain" id="PRO_0000372276" description="Putative antiporter subunit mnhB2">
    <location>
        <begin position="1"/>
        <end position="141"/>
    </location>
</feature>
<feature type="transmembrane region" description="Helical" evidence="2">
    <location>
        <begin position="10"/>
        <end position="30"/>
    </location>
</feature>
<feature type="transmembrane region" description="Helical" evidence="2">
    <location>
        <begin position="35"/>
        <end position="55"/>
    </location>
</feature>
<feature type="transmembrane region" description="Helical" evidence="2">
    <location>
        <begin position="70"/>
        <end position="90"/>
    </location>
</feature>
<feature type="transmembrane region" description="Helical" evidence="2">
    <location>
        <begin position="114"/>
        <end position="134"/>
    </location>
</feature>
<dbReference type="EMBL" id="BA000018">
    <property type="protein sequence ID" value="BAB41811.1"/>
    <property type="molecule type" value="Genomic_DNA"/>
</dbReference>
<dbReference type="PIR" id="H89831">
    <property type="entry name" value="H89831"/>
</dbReference>
<dbReference type="RefSeq" id="WP_000661906.1">
    <property type="nucleotide sequence ID" value="NC_002745.2"/>
</dbReference>
<dbReference type="SMR" id="Q7A727"/>
<dbReference type="EnsemblBacteria" id="BAB41811">
    <property type="protein sequence ID" value="BAB41811"/>
    <property type="gene ID" value="BAB41811"/>
</dbReference>
<dbReference type="KEGG" id="sau:SA0579"/>
<dbReference type="HOGENOM" id="CLU_101659_1_1_9"/>
<dbReference type="GO" id="GO:0005886">
    <property type="term" value="C:plasma membrane"/>
    <property type="evidence" value="ECO:0007669"/>
    <property type="project" value="UniProtKB-SubCell"/>
</dbReference>
<dbReference type="GO" id="GO:0015297">
    <property type="term" value="F:antiporter activity"/>
    <property type="evidence" value="ECO:0007669"/>
    <property type="project" value="UniProtKB-KW"/>
</dbReference>
<dbReference type="GO" id="GO:0006811">
    <property type="term" value="P:monoatomic ion transport"/>
    <property type="evidence" value="ECO:0007669"/>
    <property type="project" value="UniProtKB-KW"/>
</dbReference>
<dbReference type="InterPro" id="IPR050622">
    <property type="entry name" value="CPA3_antiporter_subunitB"/>
</dbReference>
<dbReference type="InterPro" id="IPR007182">
    <property type="entry name" value="MnhB"/>
</dbReference>
<dbReference type="NCBIfam" id="NF009223">
    <property type="entry name" value="PRK12573.1"/>
    <property type="match status" value="1"/>
</dbReference>
<dbReference type="NCBIfam" id="NF009224">
    <property type="entry name" value="PRK12574.1"/>
    <property type="match status" value="1"/>
</dbReference>
<dbReference type="PANTHER" id="PTHR33932">
    <property type="entry name" value="NA(+)/H(+) ANTIPORTER SUBUNIT B"/>
    <property type="match status" value="1"/>
</dbReference>
<dbReference type="PANTHER" id="PTHR33932:SF4">
    <property type="entry name" value="NA(+)_H(+) ANTIPORTER SUBUNIT B"/>
    <property type="match status" value="1"/>
</dbReference>
<dbReference type="Pfam" id="PF04039">
    <property type="entry name" value="MnhB"/>
    <property type="match status" value="1"/>
</dbReference>
<gene>
    <name type="primary">mnhB2</name>
    <name type="synonym">mrpB2</name>
    <name type="ordered locus">SA0579</name>
</gene>
<proteinExistence type="inferred from homology"/>
<sequence>MKENDVVLRTVTKLVVFILLTFGFYVFFAGHNNPGGGFIGGLIFSSAFILMFLAFNVEEVLESLPIDFRILMIIGALVSSITAIIPMFFGKPFLSQYETTWILPILGQIHVSTITLFELGILFSVVGVIVTVMLSLSGGRS</sequence>
<reference key="1">
    <citation type="journal article" date="2001" name="Lancet">
        <title>Whole genome sequencing of meticillin-resistant Staphylococcus aureus.</title>
        <authorList>
            <person name="Kuroda M."/>
            <person name="Ohta T."/>
            <person name="Uchiyama I."/>
            <person name="Baba T."/>
            <person name="Yuzawa H."/>
            <person name="Kobayashi I."/>
            <person name="Cui L."/>
            <person name="Oguchi A."/>
            <person name="Aoki K."/>
            <person name="Nagai Y."/>
            <person name="Lian J.-Q."/>
            <person name="Ito T."/>
            <person name="Kanamori M."/>
            <person name="Matsumaru H."/>
            <person name="Maruyama A."/>
            <person name="Murakami H."/>
            <person name="Hosoyama A."/>
            <person name="Mizutani-Ui Y."/>
            <person name="Takahashi N.K."/>
            <person name="Sawano T."/>
            <person name="Inoue R."/>
            <person name="Kaito C."/>
            <person name="Sekimizu K."/>
            <person name="Hirakawa H."/>
            <person name="Kuhara S."/>
            <person name="Goto S."/>
            <person name="Yabuzaki J."/>
            <person name="Kanehisa M."/>
            <person name="Yamashita A."/>
            <person name="Oshima K."/>
            <person name="Furuya K."/>
            <person name="Yoshino C."/>
            <person name="Shiba T."/>
            <person name="Hattori M."/>
            <person name="Ogasawara N."/>
            <person name="Hayashi H."/>
            <person name="Hiramatsu K."/>
        </authorList>
    </citation>
    <scope>NUCLEOTIDE SEQUENCE [LARGE SCALE GENOMIC DNA]</scope>
    <source>
        <strain>N315</strain>
    </source>
</reference>
<accession>Q7A727</accession>
<keyword id="KW-0050">Antiport</keyword>
<keyword id="KW-1003">Cell membrane</keyword>
<keyword id="KW-0406">Ion transport</keyword>
<keyword id="KW-0472">Membrane</keyword>
<keyword id="KW-0812">Transmembrane</keyword>
<keyword id="KW-1133">Transmembrane helix</keyword>
<keyword id="KW-0813">Transport</keyword>